<evidence type="ECO:0000255" key="1">
    <source>
        <dbReference type="HAMAP-Rule" id="MF_01367"/>
    </source>
</evidence>
<evidence type="ECO:0000305" key="2"/>
<sequence length="122" mass="13006">MIQTETRLKVADNSGAREILTIKVLGGSGRKFANIGDVIVASVKQATPGGAVKKGDVVKAVIVRTKSGARRADGSYIKFDENAAVIIREDKTPRGTRIFGPVARELREGGFMKIVSLAPEVL</sequence>
<reference key="1">
    <citation type="journal article" date="2009" name="J. Bacteriol.">
        <title>Role of conjugative elements in the evolution of the multidrug-resistant pandemic clone Streptococcus pneumoniae Spain23F ST81.</title>
        <authorList>
            <person name="Croucher N.J."/>
            <person name="Walker D."/>
            <person name="Romero P."/>
            <person name="Lennard N."/>
            <person name="Paterson G.K."/>
            <person name="Bason N.C."/>
            <person name="Mitchell A.M."/>
            <person name="Quail M.A."/>
            <person name="Andrew P.W."/>
            <person name="Parkhill J."/>
            <person name="Bentley S.D."/>
            <person name="Mitchell T.J."/>
        </authorList>
    </citation>
    <scope>NUCLEOTIDE SEQUENCE [LARGE SCALE GENOMIC DNA]</scope>
    <source>
        <strain>ATCC 700669 / Spain 23F-1</strain>
    </source>
</reference>
<feature type="chain" id="PRO_1000166940" description="Large ribosomal subunit protein uL14">
    <location>
        <begin position="1"/>
        <end position="122"/>
    </location>
</feature>
<organism>
    <name type="scientific">Streptococcus pneumoniae (strain ATCC 700669 / Spain 23F-1)</name>
    <dbReference type="NCBI Taxonomy" id="561276"/>
    <lineage>
        <taxon>Bacteria</taxon>
        <taxon>Bacillati</taxon>
        <taxon>Bacillota</taxon>
        <taxon>Bacilli</taxon>
        <taxon>Lactobacillales</taxon>
        <taxon>Streptococcaceae</taxon>
        <taxon>Streptococcus</taxon>
    </lineage>
</organism>
<keyword id="KW-0687">Ribonucleoprotein</keyword>
<keyword id="KW-0689">Ribosomal protein</keyword>
<keyword id="KW-0694">RNA-binding</keyword>
<keyword id="KW-0699">rRNA-binding</keyword>
<accession>B8ZKG7</accession>
<name>RL14_STRPJ</name>
<gene>
    <name evidence="1" type="primary">rplN</name>
    <name type="ordered locus">SPN23F02090</name>
</gene>
<protein>
    <recommendedName>
        <fullName evidence="1">Large ribosomal subunit protein uL14</fullName>
    </recommendedName>
    <alternativeName>
        <fullName evidence="2">50S ribosomal protein L14</fullName>
    </alternativeName>
</protein>
<dbReference type="EMBL" id="FM211187">
    <property type="protein sequence ID" value="CAR68069.1"/>
    <property type="molecule type" value="Genomic_DNA"/>
</dbReference>
<dbReference type="RefSeq" id="WP_000616545.1">
    <property type="nucleotide sequence ID" value="NC_011900.1"/>
</dbReference>
<dbReference type="SMR" id="B8ZKG7"/>
<dbReference type="GeneID" id="93738967"/>
<dbReference type="KEGG" id="sne:SPN23F02090"/>
<dbReference type="HOGENOM" id="CLU_095071_2_1_9"/>
<dbReference type="GO" id="GO:0022625">
    <property type="term" value="C:cytosolic large ribosomal subunit"/>
    <property type="evidence" value="ECO:0007669"/>
    <property type="project" value="TreeGrafter"/>
</dbReference>
<dbReference type="GO" id="GO:0070180">
    <property type="term" value="F:large ribosomal subunit rRNA binding"/>
    <property type="evidence" value="ECO:0007669"/>
    <property type="project" value="TreeGrafter"/>
</dbReference>
<dbReference type="GO" id="GO:0003735">
    <property type="term" value="F:structural constituent of ribosome"/>
    <property type="evidence" value="ECO:0007669"/>
    <property type="project" value="InterPro"/>
</dbReference>
<dbReference type="GO" id="GO:0006412">
    <property type="term" value="P:translation"/>
    <property type="evidence" value="ECO:0007669"/>
    <property type="project" value="UniProtKB-UniRule"/>
</dbReference>
<dbReference type="CDD" id="cd00337">
    <property type="entry name" value="Ribosomal_uL14"/>
    <property type="match status" value="1"/>
</dbReference>
<dbReference type="FunFam" id="2.40.150.20:FF:000001">
    <property type="entry name" value="50S ribosomal protein L14"/>
    <property type="match status" value="1"/>
</dbReference>
<dbReference type="Gene3D" id="2.40.150.20">
    <property type="entry name" value="Ribosomal protein L14"/>
    <property type="match status" value="1"/>
</dbReference>
<dbReference type="HAMAP" id="MF_01367">
    <property type="entry name" value="Ribosomal_uL14"/>
    <property type="match status" value="1"/>
</dbReference>
<dbReference type="InterPro" id="IPR000218">
    <property type="entry name" value="Ribosomal_uL14"/>
</dbReference>
<dbReference type="InterPro" id="IPR005745">
    <property type="entry name" value="Ribosomal_uL14_bac-type"/>
</dbReference>
<dbReference type="InterPro" id="IPR019972">
    <property type="entry name" value="Ribosomal_uL14_CS"/>
</dbReference>
<dbReference type="InterPro" id="IPR036853">
    <property type="entry name" value="Ribosomal_uL14_sf"/>
</dbReference>
<dbReference type="NCBIfam" id="TIGR01067">
    <property type="entry name" value="rplN_bact"/>
    <property type="match status" value="1"/>
</dbReference>
<dbReference type="PANTHER" id="PTHR11761">
    <property type="entry name" value="50S/60S RIBOSOMAL PROTEIN L14/L23"/>
    <property type="match status" value="1"/>
</dbReference>
<dbReference type="PANTHER" id="PTHR11761:SF3">
    <property type="entry name" value="LARGE RIBOSOMAL SUBUNIT PROTEIN UL14M"/>
    <property type="match status" value="1"/>
</dbReference>
<dbReference type="Pfam" id="PF00238">
    <property type="entry name" value="Ribosomal_L14"/>
    <property type="match status" value="1"/>
</dbReference>
<dbReference type="SMART" id="SM01374">
    <property type="entry name" value="Ribosomal_L14"/>
    <property type="match status" value="1"/>
</dbReference>
<dbReference type="SUPFAM" id="SSF50193">
    <property type="entry name" value="Ribosomal protein L14"/>
    <property type="match status" value="1"/>
</dbReference>
<dbReference type="PROSITE" id="PS00049">
    <property type="entry name" value="RIBOSOMAL_L14"/>
    <property type="match status" value="1"/>
</dbReference>
<comment type="function">
    <text evidence="1">Binds to 23S rRNA. Forms part of two intersubunit bridges in the 70S ribosome.</text>
</comment>
<comment type="subunit">
    <text evidence="1">Part of the 50S ribosomal subunit. Forms a cluster with proteins L3 and L19. In the 70S ribosome, L14 and L19 interact and together make contacts with the 16S rRNA in bridges B5 and B8.</text>
</comment>
<comment type="similarity">
    <text evidence="1">Belongs to the universal ribosomal protein uL14 family.</text>
</comment>
<proteinExistence type="inferred from homology"/>